<organism>
    <name type="scientific">Yersinia pestis bv. Antiqua (strain Nepal516)</name>
    <dbReference type="NCBI Taxonomy" id="377628"/>
    <lineage>
        <taxon>Bacteria</taxon>
        <taxon>Pseudomonadati</taxon>
        <taxon>Pseudomonadota</taxon>
        <taxon>Gammaproteobacteria</taxon>
        <taxon>Enterobacterales</taxon>
        <taxon>Yersiniaceae</taxon>
        <taxon>Yersinia</taxon>
    </lineage>
</organism>
<protein>
    <recommendedName>
        <fullName evidence="1">tRNA modification GTPase MnmE</fullName>
        <ecNumber evidence="1">3.6.-.-</ecNumber>
    </recommendedName>
</protein>
<name>MNME_YERPN</name>
<comment type="function">
    <text evidence="1">Exhibits a very high intrinsic GTPase hydrolysis rate. Involved in the addition of a carboxymethylaminomethyl (cmnm) group at the wobble position (U34) of certain tRNAs, forming tRNA-cmnm(5)s(2)U34.</text>
</comment>
<comment type="cofactor">
    <cofactor evidence="1">
        <name>K(+)</name>
        <dbReference type="ChEBI" id="CHEBI:29103"/>
    </cofactor>
    <text evidence="1">Binds 1 potassium ion per subunit.</text>
</comment>
<comment type="subunit">
    <text evidence="1">Homodimer. Heterotetramer of two MnmE and two MnmG subunits.</text>
</comment>
<comment type="subcellular location">
    <subcellularLocation>
        <location evidence="1">Cytoplasm</location>
    </subcellularLocation>
</comment>
<comment type="similarity">
    <text evidence="1">Belongs to the TRAFAC class TrmE-Era-EngA-EngB-Septin-like GTPase superfamily. TrmE GTPase family.</text>
</comment>
<sequence length="454" mass="49037">MSTTDTIVAQATPPGRGGVGILRVSGRAASEVAHAVLGKLPKPRYADYLPFKDVDGSTLDQGIALYFPGPNSFTGEDVLELQGHGGPVILDLLLKRILALPGLRIARPGEFSERAFLNDKLDLAQAEAIADLIDASSEQAARSAVNSLQGAFSARIHQLVEALTHLRIYVEAAIDFPDEEIDFLSDGKIEGQLNGVMADLEQVRTEARQGSLLREGMKVVIAGRPNAGKSSLLNALAGREAAIVTDIAGTTRDVLREHIHIDGMPLHIIDTAGLREANDEVERIGIERAWNEIEQADRVLFMVDGTTTDATEPAAIWPEFMARLPATLPITVVRNKADITGETLGLTKVNGHSLIRLSARTGEGIDLLRDHLKQSMGFTSNTEGGFLARRRHLQALETAARHLIQGHEQLVSAYAGELLAEELRLAQQSLSEITGEFSSDDLLGRIFSSFCIGK</sequence>
<dbReference type="EC" id="3.6.-.-" evidence="1"/>
<dbReference type="EMBL" id="CP000305">
    <property type="protein sequence ID" value="ABG20287.1"/>
    <property type="molecule type" value="Genomic_DNA"/>
</dbReference>
<dbReference type="EMBL" id="ACNQ01000019">
    <property type="protein sequence ID" value="EEO74883.1"/>
    <property type="molecule type" value="Genomic_DNA"/>
</dbReference>
<dbReference type="RefSeq" id="WP_002220740.1">
    <property type="nucleotide sequence ID" value="NZ_ACNQ01000019.1"/>
</dbReference>
<dbReference type="SMR" id="Q1CCJ3"/>
<dbReference type="GeneID" id="57974621"/>
<dbReference type="KEGG" id="ypn:YPN_3960"/>
<dbReference type="HOGENOM" id="CLU_019624_4_1_6"/>
<dbReference type="Proteomes" id="UP000008936">
    <property type="component" value="Chromosome"/>
</dbReference>
<dbReference type="GO" id="GO:0005829">
    <property type="term" value="C:cytosol"/>
    <property type="evidence" value="ECO:0007669"/>
    <property type="project" value="TreeGrafter"/>
</dbReference>
<dbReference type="GO" id="GO:0005525">
    <property type="term" value="F:GTP binding"/>
    <property type="evidence" value="ECO:0007669"/>
    <property type="project" value="UniProtKB-UniRule"/>
</dbReference>
<dbReference type="GO" id="GO:0003924">
    <property type="term" value="F:GTPase activity"/>
    <property type="evidence" value="ECO:0007669"/>
    <property type="project" value="UniProtKB-UniRule"/>
</dbReference>
<dbReference type="GO" id="GO:0046872">
    <property type="term" value="F:metal ion binding"/>
    <property type="evidence" value="ECO:0007669"/>
    <property type="project" value="UniProtKB-KW"/>
</dbReference>
<dbReference type="GO" id="GO:0030488">
    <property type="term" value="P:tRNA methylation"/>
    <property type="evidence" value="ECO:0007669"/>
    <property type="project" value="TreeGrafter"/>
</dbReference>
<dbReference type="GO" id="GO:0002098">
    <property type="term" value="P:tRNA wobble uridine modification"/>
    <property type="evidence" value="ECO:0007669"/>
    <property type="project" value="TreeGrafter"/>
</dbReference>
<dbReference type="CDD" id="cd04164">
    <property type="entry name" value="trmE"/>
    <property type="match status" value="1"/>
</dbReference>
<dbReference type="CDD" id="cd14858">
    <property type="entry name" value="TrmE_N"/>
    <property type="match status" value="1"/>
</dbReference>
<dbReference type="FunFam" id="3.30.1360.120:FF:000001">
    <property type="entry name" value="tRNA modification GTPase MnmE"/>
    <property type="match status" value="1"/>
</dbReference>
<dbReference type="FunFam" id="3.40.50.300:FF:000249">
    <property type="entry name" value="tRNA modification GTPase MnmE"/>
    <property type="match status" value="1"/>
</dbReference>
<dbReference type="Gene3D" id="3.40.50.300">
    <property type="entry name" value="P-loop containing nucleotide triphosphate hydrolases"/>
    <property type="match status" value="1"/>
</dbReference>
<dbReference type="Gene3D" id="3.30.1360.120">
    <property type="entry name" value="Probable tRNA modification gtpase trme, domain 1"/>
    <property type="match status" value="1"/>
</dbReference>
<dbReference type="Gene3D" id="1.20.120.430">
    <property type="entry name" value="tRNA modification GTPase MnmE domain 2"/>
    <property type="match status" value="1"/>
</dbReference>
<dbReference type="HAMAP" id="MF_00379">
    <property type="entry name" value="GTPase_MnmE"/>
    <property type="match status" value="1"/>
</dbReference>
<dbReference type="InterPro" id="IPR031168">
    <property type="entry name" value="G_TrmE"/>
</dbReference>
<dbReference type="InterPro" id="IPR006073">
    <property type="entry name" value="GTP-bd"/>
</dbReference>
<dbReference type="InterPro" id="IPR018948">
    <property type="entry name" value="GTP-bd_TrmE_N"/>
</dbReference>
<dbReference type="InterPro" id="IPR004520">
    <property type="entry name" value="GTPase_MnmE"/>
</dbReference>
<dbReference type="InterPro" id="IPR027368">
    <property type="entry name" value="MnmE_dom2"/>
</dbReference>
<dbReference type="InterPro" id="IPR025867">
    <property type="entry name" value="MnmE_helical"/>
</dbReference>
<dbReference type="InterPro" id="IPR027417">
    <property type="entry name" value="P-loop_NTPase"/>
</dbReference>
<dbReference type="InterPro" id="IPR005225">
    <property type="entry name" value="Small_GTP-bd"/>
</dbReference>
<dbReference type="InterPro" id="IPR027266">
    <property type="entry name" value="TrmE/GcvT_dom1"/>
</dbReference>
<dbReference type="NCBIfam" id="TIGR00450">
    <property type="entry name" value="mnmE_trmE_thdF"/>
    <property type="match status" value="1"/>
</dbReference>
<dbReference type="NCBIfam" id="NF003661">
    <property type="entry name" value="PRK05291.1-3"/>
    <property type="match status" value="1"/>
</dbReference>
<dbReference type="NCBIfam" id="TIGR00231">
    <property type="entry name" value="small_GTP"/>
    <property type="match status" value="1"/>
</dbReference>
<dbReference type="PANTHER" id="PTHR42714">
    <property type="entry name" value="TRNA MODIFICATION GTPASE GTPBP3"/>
    <property type="match status" value="1"/>
</dbReference>
<dbReference type="PANTHER" id="PTHR42714:SF2">
    <property type="entry name" value="TRNA MODIFICATION GTPASE GTPBP3, MITOCHONDRIAL"/>
    <property type="match status" value="1"/>
</dbReference>
<dbReference type="Pfam" id="PF01926">
    <property type="entry name" value="MMR_HSR1"/>
    <property type="match status" value="1"/>
</dbReference>
<dbReference type="Pfam" id="PF12631">
    <property type="entry name" value="MnmE_helical"/>
    <property type="match status" value="1"/>
</dbReference>
<dbReference type="Pfam" id="PF10396">
    <property type="entry name" value="TrmE_N"/>
    <property type="match status" value="1"/>
</dbReference>
<dbReference type="SUPFAM" id="SSF52540">
    <property type="entry name" value="P-loop containing nucleoside triphosphate hydrolases"/>
    <property type="match status" value="1"/>
</dbReference>
<dbReference type="SUPFAM" id="SSF116878">
    <property type="entry name" value="TrmE connector domain"/>
    <property type="match status" value="1"/>
</dbReference>
<dbReference type="PROSITE" id="PS51709">
    <property type="entry name" value="G_TRME"/>
    <property type="match status" value="1"/>
</dbReference>
<evidence type="ECO:0000255" key="1">
    <source>
        <dbReference type="HAMAP-Rule" id="MF_00379"/>
    </source>
</evidence>
<accession>Q1CCJ3</accession>
<accession>D1Q2Y0</accession>
<keyword id="KW-0963">Cytoplasm</keyword>
<keyword id="KW-0342">GTP-binding</keyword>
<keyword id="KW-0378">Hydrolase</keyword>
<keyword id="KW-0460">Magnesium</keyword>
<keyword id="KW-0479">Metal-binding</keyword>
<keyword id="KW-0547">Nucleotide-binding</keyword>
<keyword id="KW-0630">Potassium</keyword>
<keyword id="KW-0819">tRNA processing</keyword>
<reference key="1">
    <citation type="journal article" date="2006" name="J. Bacteriol.">
        <title>Complete genome sequence of Yersinia pestis strains Antiqua and Nepal516: evidence of gene reduction in an emerging pathogen.</title>
        <authorList>
            <person name="Chain P.S.G."/>
            <person name="Hu P."/>
            <person name="Malfatti S.A."/>
            <person name="Radnedge L."/>
            <person name="Larimer F."/>
            <person name="Vergez L.M."/>
            <person name="Worsham P."/>
            <person name="Chu M.C."/>
            <person name="Andersen G.L."/>
        </authorList>
    </citation>
    <scope>NUCLEOTIDE SEQUENCE [LARGE SCALE GENOMIC DNA]</scope>
    <source>
        <strain>Nepal516</strain>
    </source>
</reference>
<reference key="2">
    <citation type="submission" date="2009-04" db="EMBL/GenBank/DDBJ databases">
        <title>Yersinia pestis Nepal516A whole genome shotgun sequencing project.</title>
        <authorList>
            <person name="Plunkett G. III"/>
            <person name="Anderson B.D."/>
            <person name="Baumler D.J."/>
            <person name="Burland V."/>
            <person name="Cabot E.L."/>
            <person name="Glasner J.D."/>
            <person name="Mau B."/>
            <person name="Neeno-Eckwall E."/>
            <person name="Perna N.T."/>
            <person name="Munk A.C."/>
            <person name="Tapia R."/>
            <person name="Green L.D."/>
            <person name="Rogers Y.C."/>
            <person name="Detter J.C."/>
            <person name="Bruce D.C."/>
            <person name="Brettin T.S."/>
        </authorList>
    </citation>
    <scope>NUCLEOTIDE SEQUENCE [LARGE SCALE GENOMIC DNA]</scope>
    <source>
        <strain>Nepal516</strain>
    </source>
</reference>
<proteinExistence type="inferred from homology"/>
<gene>
    <name evidence="1" type="primary">mnmE</name>
    <name evidence="1" type="synonym">trmE</name>
    <name type="ordered locus">YPN_3960</name>
    <name type="ORF">YP516_4493</name>
</gene>
<feature type="chain" id="PRO_1000048910" description="tRNA modification GTPase MnmE">
    <location>
        <begin position="1"/>
        <end position="454"/>
    </location>
</feature>
<feature type="domain" description="TrmE-type G">
    <location>
        <begin position="216"/>
        <end position="377"/>
    </location>
</feature>
<feature type="binding site" evidence="1">
    <location>
        <position position="23"/>
    </location>
    <ligand>
        <name>(6S)-5-formyl-5,6,7,8-tetrahydrofolate</name>
        <dbReference type="ChEBI" id="CHEBI:57457"/>
    </ligand>
</feature>
<feature type="binding site" evidence="1">
    <location>
        <position position="80"/>
    </location>
    <ligand>
        <name>(6S)-5-formyl-5,6,7,8-tetrahydrofolate</name>
        <dbReference type="ChEBI" id="CHEBI:57457"/>
    </ligand>
</feature>
<feature type="binding site" evidence="1">
    <location>
        <position position="120"/>
    </location>
    <ligand>
        <name>(6S)-5-formyl-5,6,7,8-tetrahydrofolate</name>
        <dbReference type="ChEBI" id="CHEBI:57457"/>
    </ligand>
</feature>
<feature type="binding site" evidence="1">
    <location>
        <begin position="226"/>
        <end position="231"/>
    </location>
    <ligand>
        <name>GTP</name>
        <dbReference type="ChEBI" id="CHEBI:37565"/>
    </ligand>
</feature>
<feature type="binding site" evidence="1">
    <location>
        <position position="226"/>
    </location>
    <ligand>
        <name>K(+)</name>
        <dbReference type="ChEBI" id="CHEBI:29103"/>
    </ligand>
</feature>
<feature type="binding site" evidence="1">
    <location>
        <position position="230"/>
    </location>
    <ligand>
        <name>Mg(2+)</name>
        <dbReference type="ChEBI" id="CHEBI:18420"/>
    </ligand>
</feature>
<feature type="binding site" evidence="1">
    <location>
        <begin position="245"/>
        <end position="251"/>
    </location>
    <ligand>
        <name>GTP</name>
        <dbReference type="ChEBI" id="CHEBI:37565"/>
    </ligand>
</feature>
<feature type="binding site" evidence="1">
    <location>
        <position position="245"/>
    </location>
    <ligand>
        <name>K(+)</name>
        <dbReference type="ChEBI" id="CHEBI:29103"/>
    </ligand>
</feature>
<feature type="binding site" evidence="1">
    <location>
        <position position="247"/>
    </location>
    <ligand>
        <name>K(+)</name>
        <dbReference type="ChEBI" id="CHEBI:29103"/>
    </ligand>
</feature>
<feature type="binding site" evidence="1">
    <location>
        <position position="250"/>
    </location>
    <ligand>
        <name>K(+)</name>
        <dbReference type="ChEBI" id="CHEBI:29103"/>
    </ligand>
</feature>
<feature type="binding site" evidence="1">
    <location>
        <position position="251"/>
    </location>
    <ligand>
        <name>Mg(2+)</name>
        <dbReference type="ChEBI" id="CHEBI:18420"/>
    </ligand>
</feature>
<feature type="binding site" evidence="1">
    <location>
        <begin position="270"/>
        <end position="273"/>
    </location>
    <ligand>
        <name>GTP</name>
        <dbReference type="ChEBI" id="CHEBI:37565"/>
    </ligand>
</feature>
<feature type="binding site" evidence="1">
    <location>
        <begin position="335"/>
        <end position="338"/>
    </location>
    <ligand>
        <name>GTP</name>
        <dbReference type="ChEBI" id="CHEBI:37565"/>
    </ligand>
</feature>
<feature type="binding site" evidence="1">
    <location>
        <begin position="358"/>
        <end position="360"/>
    </location>
    <ligand>
        <name>GTP</name>
        <dbReference type="ChEBI" id="CHEBI:37565"/>
    </ligand>
</feature>
<feature type="binding site" evidence="1">
    <location>
        <position position="454"/>
    </location>
    <ligand>
        <name>(6S)-5-formyl-5,6,7,8-tetrahydrofolate</name>
        <dbReference type="ChEBI" id="CHEBI:57457"/>
    </ligand>
</feature>